<keyword id="KW-0884">PQQ biosynthesis</keyword>
<evidence type="ECO:0000250" key="1"/>
<evidence type="ECO:0000269" key="2">
    <source>
    </source>
</evidence>
<evidence type="ECO:0000305" key="3"/>
<dbReference type="EMBL" id="X58778">
    <property type="protein sequence ID" value="CAA41579.1"/>
    <property type="molecule type" value="Genomic_DNA"/>
</dbReference>
<dbReference type="PIR" id="S20453">
    <property type="entry name" value="S20453"/>
</dbReference>
<dbReference type="RefSeq" id="WP_002905689.1">
    <property type="nucleotide sequence ID" value="NZ_WYAM01000001.1"/>
</dbReference>
<dbReference type="GeneID" id="93312096"/>
<dbReference type="BioCyc" id="MetaCyc:MONOMER-15349"/>
<dbReference type="UniPathway" id="UPA00539"/>
<dbReference type="GO" id="GO:0018189">
    <property type="term" value="P:pyrroloquinoline quinone biosynthetic process"/>
    <property type="evidence" value="ECO:0007669"/>
    <property type="project" value="UniProtKB-UniRule"/>
</dbReference>
<dbReference type="HAMAP" id="MF_00656">
    <property type="entry name" value="PQQ_syn_PqqA"/>
    <property type="match status" value="1"/>
</dbReference>
<dbReference type="InterPro" id="IPR011725">
    <property type="entry name" value="PQQ_synth_PqqA"/>
</dbReference>
<dbReference type="NCBIfam" id="TIGR02107">
    <property type="entry name" value="PQQ_syn_pqqA"/>
    <property type="match status" value="1"/>
</dbReference>
<dbReference type="Pfam" id="PF08042">
    <property type="entry name" value="PqqA"/>
    <property type="match status" value="1"/>
</dbReference>
<organism>
    <name type="scientific">Klebsiella pneumoniae</name>
    <dbReference type="NCBI Taxonomy" id="573"/>
    <lineage>
        <taxon>Bacteria</taxon>
        <taxon>Pseudomonadati</taxon>
        <taxon>Pseudomonadota</taxon>
        <taxon>Gammaproteobacteria</taxon>
        <taxon>Enterobacterales</taxon>
        <taxon>Enterobacteriaceae</taxon>
        <taxon>Klebsiella/Raoultella group</taxon>
        <taxon>Klebsiella</taxon>
        <taxon>Klebsiella pneumoniae complex</taxon>
    </lineage>
</organism>
<proteinExistence type="inferred from homology"/>
<feature type="chain" id="PRO_0000220309" description="Coenzyme PQQ synthesis protein A">
    <location>
        <begin position="1"/>
        <end position="23"/>
    </location>
</feature>
<feature type="cross-link" description="Pyrroloquinoline quinone (Glu-Tyr)" evidence="1">
    <location>
        <begin position="15"/>
        <end position="19"/>
    </location>
</feature>
<accession>P27503</accession>
<name>PQQA_KLEPN</name>
<sequence>MWKKPAFIDLRLGLEVTLYISNR</sequence>
<reference key="1">
    <citation type="journal article" date="1992" name="Mol. Gen. Genet.">
        <title>Nucleotide sequence and structure of the Klebsiella pneumoniae pqq operon.</title>
        <authorList>
            <person name="Meulenberg J.J.M."/>
            <person name="Sellink E."/>
            <person name="Riegman N.H."/>
            <person name="Postma P.W."/>
        </authorList>
    </citation>
    <scope>NUCLEOTIDE SEQUENCE [GENOMIC DNA]</scope>
    <source>
        <strain>ATCC 15380 / DSM 2026 / NCTC 418 / NCIMB 418</strain>
    </source>
</reference>
<reference key="2">
    <citation type="journal article" date="1995" name="J. Bacteriol.">
        <title>Synthesis of pyrroloquinoline quinone in vivo and in vitro and detection of an intermediate in the biosynthetic pathway.</title>
        <authorList>
            <person name="Velterop J.S."/>
            <person name="Sellink E."/>
            <person name="Meulenberg J.J."/>
            <person name="David S."/>
            <person name="Bulder I."/>
            <person name="Postma P.W."/>
        </authorList>
    </citation>
    <scope>FUNCTION</scope>
    <source>
        <strain>ATCC 15380 / DSM 2026 / NCTC 418 / NCIMB 418</strain>
    </source>
</reference>
<gene>
    <name type="primary">pqqA</name>
</gene>
<protein>
    <recommendedName>
        <fullName>Coenzyme PQQ synthesis protein A</fullName>
    </recommendedName>
    <alternativeName>
        <fullName>Pyrroloquinoline quinone biosynthesis protein A</fullName>
    </alternativeName>
</protein>
<comment type="function">
    <text evidence="2">Required for coenzyme pyrroloquinoline quinone (PQQ) biosynthesis. PQQ is probably formed by cross-linking a specific glutamate to a specific tyrosine residue and excising these residues from the peptide.</text>
</comment>
<comment type="pathway">
    <text>Cofactor biosynthesis; pyrroloquinoline quinone biosynthesis.</text>
</comment>
<comment type="similarity">
    <text evidence="3">Belongs to the PqqA family.</text>
</comment>